<proteinExistence type="inferred from homology"/>
<gene>
    <name evidence="1" type="primary">argH</name>
    <name type="ordered locus">SP70585_0178</name>
</gene>
<name>ARLY_STRP7</name>
<evidence type="ECO:0000255" key="1">
    <source>
        <dbReference type="HAMAP-Rule" id="MF_00006"/>
    </source>
</evidence>
<keyword id="KW-0028">Amino-acid biosynthesis</keyword>
<keyword id="KW-0055">Arginine biosynthesis</keyword>
<keyword id="KW-0963">Cytoplasm</keyword>
<keyword id="KW-0456">Lyase</keyword>
<protein>
    <recommendedName>
        <fullName evidence="1">Argininosuccinate lyase</fullName>
        <shortName evidence="1">ASAL</shortName>
        <ecNumber evidence="1">4.3.2.1</ecNumber>
    </recommendedName>
    <alternativeName>
        <fullName evidence="1">Arginosuccinase</fullName>
    </alternativeName>
</protein>
<comment type="catalytic activity">
    <reaction evidence="1">
        <text>2-(N(omega)-L-arginino)succinate = fumarate + L-arginine</text>
        <dbReference type="Rhea" id="RHEA:24020"/>
        <dbReference type="ChEBI" id="CHEBI:29806"/>
        <dbReference type="ChEBI" id="CHEBI:32682"/>
        <dbReference type="ChEBI" id="CHEBI:57472"/>
        <dbReference type="EC" id="4.3.2.1"/>
    </reaction>
</comment>
<comment type="pathway">
    <text evidence="1">Amino-acid biosynthesis; L-arginine biosynthesis; L-arginine from L-ornithine and carbamoyl phosphate: step 3/3.</text>
</comment>
<comment type="subcellular location">
    <subcellularLocation>
        <location evidence="1">Cytoplasm</location>
    </subcellularLocation>
</comment>
<comment type="similarity">
    <text evidence="1">Belongs to the lyase 1 family. Argininosuccinate lyase subfamily.</text>
</comment>
<dbReference type="EC" id="4.3.2.1" evidence="1"/>
<dbReference type="EMBL" id="CP000918">
    <property type="protein sequence ID" value="ACO17035.1"/>
    <property type="molecule type" value="Genomic_DNA"/>
</dbReference>
<dbReference type="RefSeq" id="WP_001107613.1">
    <property type="nucleotide sequence ID" value="NC_012468.1"/>
</dbReference>
<dbReference type="SMR" id="C1CAC7"/>
<dbReference type="KEGG" id="snm:SP70585_0178"/>
<dbReference type="HOGENOM" id="CLU_027272_2_3_9"/>
<dbReference type="UniPathway" id="UPA00068">
    <property type="reaction ID" value="UER00114"/>
</dbReference>
<dbReference type="Proteomes" id="UP000002211">
    <property type="component" value="Chromosome"/>
</dbReference>
<dbReference type="GO" id="GO:0005829">
    <property type="term" value="C:cytosol"/>
    <property type="evidence" value="ECO:0007669"/>
    <property type="project" value="TreeGrafter"/>
</dbReference>
<dbReference type="GO" id="GO:0004056">
    <property type="term" value="F:argininosuccinate lyase activity"/>
    <property type="evidence" value="ECO:0007669"/>
    <property type="project" value="UniProtKB-UniRule"/>
</dbReference>
<dbReference type="GO" id="GO:0042450">
    <property type="term" value="P:arginine biosynthetic process via ornithine"/>
    <property type="evidence" value="ECO:0007669"/>
    <property type="project" value="InterPro"/>
</dbReference>
<dbReference type="GO" id="GO:0006526">
    <property type="term" value="P:L-arginine biosynthetic process"/>
    <property type="evidence" value="ECO:0007669"/>
    <property type="project" value="UniProtKB-UniRule"/>
</dbReference>
<dbReference type="CDD" id="cd01359">
    <property type="entry name" value="Argininosuccinate_lyase"/>
    <property type="match status" value="1"/>
</dbReference>
<dbReference type="FunFam" id="1.10.275.10:FF:000002">
    <property type="entry name" value="Argininosuccinate lyase"/>
    <property type="match status" value="1"/>
</dbReference>
<dbReference type="FunFam" id="1.10.40.30:FF:000001">
    <property type="entry name" value="Argininosuccinate lyase"/>
    <property type="match status" value="1"/>
</dbReference>
<dbReference type="FunFam" id="1.20.200.10:FF:000002">
    <property type="entry name" value="Argininosuccinate lyase"/>
    <property type="match status" value="1"/>
</dbReference>
<dbReference type="Gene3D" id="1.10.40.30">
    <property type="entry name" value="Fumarase/aspartase (C-terminal domain)"/>
    <property type="match status" value="1"/>
</dbReference>
<dbReference type="Gene3D" id="1.20.200.10">
    <property type="entry name" value="Fumarase/aspartase (Central domain)"/>
    <property type="match status" value="1"/>
</dbReference>
<dbReference type="Gene3D" id="1.10.275.10">
    <property type="entry name" value="Fumarase/aspartase (N-terminal domain)"/>
    <property type="match status" value="1"/>
</dbReference>
<dbReference type="HAMAP" id="MF_00006">
    <property type="entry name" value="Arg_succ_lyase"/>
    <property type="match status" value="1"/>
</dbReference>
<dbReference type="InterPro" id="IPR029419">
    <property type="entry name" value="Arg_succ_lyase_C"/>
</dbReference>
<dbReference type="InterPro" id="IPR009049">
    <property type="entry name" value="Argininosuccinate_lyase"/>
</dbReference>
<dbReference type="InterPro" id="IPR024083">
    <property type="entry name" value="Fumarase/histidase_N"/>
</dbReference>
<dbReference type="InterPro" id="IPR020557">
    <property type="entry name" value="Fumarate_lyase_CS"/>
</dbReference>
<dbReference type="InterPro" id="IPR000362">
    <property type="entry name" value="Fumarate_lyase_fam"/>
</dbReference>
<dbReference type="InterPro" id="IPR022761">
    <property type="entry name" value="Fumarate_lyase_N"/>
</dbReference>
<dbReference type="InterPro" id="IPR008948">
    <property type="entry name" value="L-Aspartase-like"/>
</dbReference>
<dbReference type="NCBIfam" id="TIGR00838">
    <property type="entry name" value="argH"/>
    <property type="match status" value="1"/>
</dbReference>
<dbReference type="PANTHER" id="PTHR43814">
    <property type="entry name" value="ARGININOSUCCINATE LYASE"/>
    <property type="match status" value="1"/>
</dbReference>
<dbReference type="PANTHER" id="PTHR43814:SF1">
    <property type="entry name" value="ARGININOSUCCINATE LYASE"/>
    <property type="match status" value="1"/>
</dbReference>
<dbReference type="Pfam" id="PF14698">
    <property type="entry name" value="ASL_C2"/>
    <property type="match status" value="1"/>
</dbReference>
<dbReference type="Pfam" id="PF00206">
    <property type="entry name" value="Lyase_1"/>
    <property type="match status" value="1"/>
</dbReference>
<dbReference type="PRINTS" id="PR00145">
    <property type="entry name" value="ARGSUCLYASE"/>
</dbReference>
<dbReference type="PRINTS" id="PR00149">
    <property type="entry name" value="FUMRATELYASE"/>
</dbReference>
<dbReference type="SUPFAM" id="SSF48557">
    <property type="entry name" value="L-aspartase-like"/>
    <property type="match status" value="1"/>
</dbReference>
<dbReference type="PROSITE" id="PS00163">
    <property type="entry name" value="FUMARATE_LYASES"/>
    <property type="match status" value="1"/>
</dbReference>
<reference key="1">
    <citation type="journal article" date="2010" name="Genome Biol.">
        <title>Structure and dynamics of the pan-genome of Streptococcus pneumoniae and closely related species.</title>
        <authorList>
            <person name="Donati C."/>
            <person name="Hiller N.L."/>
            <person name="Tettelin H."/>
            <person name="Muzzi A."/>
            <person name="Croucher N.J."/>
            <person name="Angiuoli S.V."/>
            <person name="Oggioni M."/>
            <person name="Dunning Hotopp J.C."/>
            <person name="Hu F.Z."/>
            <person name="Riley D.R."/>
            <person name="Covacci A."/>
            <person name="Mitchell T.J."/>
            <person name="Bentley S.D."/>
            <person name="Kilian M."/>
            <person name="Ehrlich G.D."/>
            <person name="Rappuoli R."/>
            <person name="Moxon E.R."/>
            <person name="Masignani V."/>
        </authorList>
    </citation>
    <scope>NUCLEOTIDE SEQUENCE [LARGE SCALE GENOMIC DNA]</scope>
    <source>
        <strain>70585</strain>
    </source>
</reference>
<sequence>MAKNTKLWGGRFEGTVEDWVERFGASISFDQKLAKFDVIGSLAHVQMLGQTGILSLEESEKIQVGLKELLEELEAGQLDFDIANEDIHMNMEVLLTEKIGPLAGKLHTARSRNDQVATDMHLYLKEQLGYVLDKLAHLKGVLLDLAENHVATIMPGYTHLQHAQPISFAHHLMAYYNMFQRDSERFEFNQKHTDLCPLGAAALAGTTFPIDRQLSSDLLEFKQPYTNSLDAVSDRDFILEFLSNASILMMHMSRFCEEMINWCSFEYQFITLSDTFTIGSSIMPQKKNPDMAELIRGKTGRVYGHLFGLLTVMKSLPLAYNKDLQEDKEGMFDTVETILNSLDVLAGMLSSLQVNKEKMQESTEKDFSNATELADYLAGKGLPFREAHEVVGRLVLDSIKSAKNLQDWTLEELQTYHSLITEDIYVYLQPKTAVQRRNSLGGTGFDQVEYQIAVAKKANEAKK</sequence>
<accession>C1CAC7</accession>
<organism>
    <name type="scientific">Streptococcus pneumoniae (strain 70585)</name>
    <dbReference type="NCBI Taxonomy" id="488221"/>
    <lineage>
        <taxon>Bacteria</taxon>
        <taxon>Bacillati</taxon>
        <taxon>Bacillota</taxon>
        <taxon>Bacilli</taxon>
        <taxon>Lactobacillales</taxon>
        <taxon>Streptococcaceae</taxon>
        <taxon>Streptococcus</taxon>
    </lineage>
</organism>
<feature type="chain" id="PRO_1000116346" description="Argininosuccinate lyase">
    <location>
        <begin position="1"/>
        <end position="463"/>
    </location>
</feature>